<sequence length="264" mass="30282">MKVYHDLMRHVLEQGHKKEDRTGTGTLSVFGYQMRFDLSEGFPLLTTKKVHLKSIIHELLWFLQGSTNIAYLKENGVTIWDEWADAEGNLGPVYGYQWRNWPKPDGGHIDQISEVIAAIKRNPDSRRLIVSAWNVADVDKMKLPPCHAFFQFYVADGKLSCQLYQRSADIFLGVPFNIASYALLTMMVAQVCDLKLGDFVHTLGDAHIYLNHLEQVKEQLSREPYPLPVMRINPEVKDIFAFRFEDFTLENYQSHPAIKAPVAV</sequence>
<gene>
    <name evidence="1" type="primary">thyA1</name>
    <name type="ordered locus">Mfla_0906</name>
</gene>
<gene>
    <name evidence="1" type="primary">thyA2</name>
    <name type="ordered locus">Mfla_1050</name>
</gene>
<comment type="function">
    <text evidence="1">Catalyzes the reductive methylation of 2'-deoxyuridine-5'-monophosphate (dUMP) to 2'-deoxythymidine-5'-monophosphate (dTMP) while utilizing 5,10-methylenetetrahydrofolate (mTHF) as the methyl donor and reductant in the reaction, yielding dihydrofolate (DHF) as a by-product. This enzymatic reaction provides an intracellular de novo source of dTMP, an essential precursor for DNA biosynthesis.</text>
</comment>
<comment type="catalytic activity">
    <reaction evidence="1">
        <text>dUMP + (6R)-5,10-methylene-5,6,7,8-tetrahydrofolate = 7,8-dihydrofolate + dTMP</text>
        <dbReference type="Rhea" id="RHEA:12104"/>
        <dbReference type="ChEBI" id="CHEBI:15636"/>
        <dbReference type="ChEBI" id="CHEBI:57451"/>
        <dbReference type="ChEBI" id="CHEBI:63528"/>
        <dbReference type="ChEBI" id="CHEBI:246422"/>
        <dbReference type="EC" id="2.1.1.45"/>
    </reaction>
</comment>
<comment type="pathway">
    <text evidence="1">Pyrimidine metabolism; dTTP biosynthesis.</text>
</comment>
<comment type="subunit">
    <text evidence="1">Homodimer.</text>
</comment>
<comment type="subcellular location">
    <subcellularLocation>
        <location evidence="1">Cytoplasm</location>
    </subcellularLocation>
</comment>
<comment type="similarity">
    <text evidence="1">Belongs to the thymidylate synthase family. Bacterial-type ThyA subfamily.</text>
</comment>
<reference key="1">
    <citation type="journal article" date="1999" name="Microbiology">
        <title>Organization of threonine biosynthesis genes from the obligate methylotroph Methylobacillus flagellatus.</title>
        <authorList>
            <person name="Marchenko G.N."/>
            <person name="Marchenko N.D."/>
            <person name="Tsygankov Y.D."/>
            <person name="Chistoserdov A.Y."/>
        </authorList>
    </citation>
    <scope>NUCLEOTIDE SEQUENCE [GENOMIC DNA]</scope>
</reference>
<reference key="2">
    <citation type="submission" date="2006-03" db="EMBL/GenBank/DDBJ databases">
        <title>Complete sequence of Methylobacillus flagellatus KT.</title>
        <authorList>
            <consortium name="US DOE Joint Genome Institute"/>
            <person name="Copeland A."/>
            <person name="Lucas S."/>
            <person name="Lapidus A."/>
            <person name="Barry K."/>
            <person name="Detter J.C."/>
            <person name="Glavina del Rio T."/>
            <person name="Hammon N."/>
            <person name="Israni S."/>
            <person name="Dalin E."/>
            <person name="Tice H."/>
            <person name="Pitluck S."/>
            <person name="Brettin T."/>
            <person name="Bruce D."/>
            <person name="Han C."/>
            <person name="Tapia R."/>
            <person name="Saunders E."/>
            <person name="Gilna P."/>
            <person name="Schmutz J."/>
            <person name="Larimer F."/>
            <person name="Land M."/>
            <person name="Kyrpides N."/>
            <person name="Anderson I."/>
            <person name="Richardson P."/>
        </authorList>
    </citation>
    <scope>NUCLEOTIDE SEQUENCE [LARGE SCALE GENOMIC DNA]</scope>
    <source>
        <strain>ATCC 51484 / DSM 6875 / VKM B-1610 / KT</strain>
    </source>
</reference>
<feature type="chain" id="PRO_0000140981" description="Thymidylate synthase">
    <location>
        <begin position="1"/>
        <end position="264"/>
    </location>
</feature>
<feature type="active site" description="Nucleophile" evidence="1">
    <location>
        <position position="146"/>
    </location>
</feature>
<feature type="binding site" description="in other chain" evidence="1">
    <location>
        <position position="21"/>
    </location>
    <ligand>
        <name>dUMP</name>
        <dbReference type="ChEBI" id="CHEBI:246422"/>
        <note>ligand shared between dimeric partners</note>
    </ligand>
</feature>
<feature type="binding site" evidence="1">
    <location>
        <position position="51"/>
    </location>
    <ligand>
        <name>(6R)-5,10-methylene-5,6,7,8-tetrahydrofolate</name>
        <dbReference type="ChEBI" id="CHEBI:15636"/>
    </ligand>
</feature>
<feature type="binding site" evidence="1">
    <location>
        <begin position="126"/>
        <end position="127"/>
    </location>
    <ligand>
        <name>dUMP</name>
        <dbReference type="ChEBI" id="CHEBI:246422"/>
        <note>ligand shared between dimeric partners</note>
    </ligand>
</feature>
<feature type="binding site" description="in other chain" evidence="1">
    <location>
        <begin position="166"/>
        <end position="169"/>
    </location>
    <ligand>
        <name>dUMP</name>
        <dbReference type="ChEBI" id="CHEBI:246422"/>
        <note>ligand shared between dimeric partners</note>
    </ligand>
</feature>
<feature type="binding site" evidence="1">
    <location>
        <position position="169"/>
    </location>
    <ligand>
        <name>(6R)-5,10-methylene-5,6,7,8-tetrahydrofolate</name>
        <dbReference type="ChEBI" id="CHEBI:15636"/>
    </ligand>
</feature>
<feature type="binding site" description="in other chain" evidence="1">
    <location>
        <position position="177"/>
    </location>
    <ligand>
        <name>dUMP</name>
        <dbReference type="ChEBI" id="CHEBI:246422"/>
        <note>ligand shared between dimeric partners</note>
    </ligand>
</feature>
<feature type="binding site" description="in other chain" evidence="1">
    <location>
        <begin position="207"/>
        <end position="209"/>
    </location>
    <ligand>
        <name>dUMP</name>
        <dbReference type="ChEBI" id="CHEBI:246422"/>
        <note>ligand shared between dimeric partners</note>
    </ligand>
</feature>
<feature type="binding site" evidence="1">
    <location>
        <position position="263"/>
    </location>
    <ligand>
        <name>(6R)-5,10-methylene-5,6,7,8-tetrahydrofolate</name>
        <dbReference type="ChEBI" id="CHEBI:15636"/>
    </ligand>
</feature>
<feature type="sequence conflict" description="In Ref. 1; AAF21131." evidence="2" ref="1">
    <original>KS</original>
    <variation>NA</variation>
    <location>
        <begin position="53"/>
        <end position="54"/>
    </location>
</feature>
<feature type="sequence conflict" description="In Ref. 1; AAF21131." evidence="2" ref="1">
    <original>R</original>
    <variation>S</variation>
    <location>
        <position position="121"/>
    </location>
</feature>
<feature type="sequence conflict" description="In Ref. 1; AAF21131." evidence="2" ref="1">
    <original>K</original>
    <variation>E</variation>
    <location>
        <position position="142"/>
    </location>
</feature>
<feature type="sequence conflict" description="In Ref. 1; AAF21131." evidence="2" ref="1">
    <original>F</original>
    <variation>L</variation>
    <location>
        <position position="149"/>
    </location>
</feature>
<feature type="sequence conflict" description="In Ref. 1; AAF21131." evidence="2" ref="1">
    <original>D</original>
    <variation>E</variation>
    <location>
        <position position="156"/>
    </location>
</feature>
<feature type="sequence conflict" description="In Ref. 1; AAF21131." evidence="2" ref="1">
    <original>Q</original>
    <variation>R</variation>
    <location>
        <position position="190"/>
    </location>
</feature>
<feature type="sequence conflict" description="In Ref. 1; AAF21131." evidence="2" ref="1">
    <original>K</original>
    <variation>E</variation>
    <location>
        <position position="195"/>
    </location>
</feature>
<evidence type="ECO:0000255" key="1">
    <source>
        <dbReference type="HAMAP-Rule" id="MF_00008"/>
    </source>
</evidence>
<evidence type="ECO:0000305" key="2"/>
<organism>
    <name type="scientific">Methylobacillus flagellatus (strain ATCC 51484 / DSM 6875 / VKM B-1610 / KT)</name>
    <dbReference type="NCBI Taxonomy" id="265072"/>
    <lineage>
        <taxon>Bacteria</taxon>
        <taxon>Pseudomonadati</taxon>
        <taxon>Pseudomonadota</taxon>
        <taxon>Betaproteobacteria</taxon>
        <taxon>Nitrosomonadales</taxon>
        <taxon>Methylophilaceae</taxon>
        <taxon>Methylobacillus</taxon>
    </lineage>
</organism>
<proteinExistence type="inferred from homology"/>
<name>TYSY_METFK</name>
<accession>Q9RAM7</accession>
<accession>Q1H2G9</accession>
<protein>
    <recommendedName>
        <fullName evidence="1">Thymidylate synthase</fullName>
        <shortName evidence="1">TS</shortName>
        <shortName evidence="1">TSase</shortName>
        <ecNumber evidence="1">2.1.1.45</ecNumber>
    </recommendedName>
</protein>
<dbReference type="EC" id="2.1.1.45" evidence="1"/>
<dbReference type="EMBL" id="L78665">
    <property type="protein sequence ID" value="AAF21131.1"/>
    <property type="molecule type" value="Genomic_DNA"/>
</dbReference>
<dbReference type="EMBL" id="CP000284">
    <property type="protein sequence ID" value="ABE49318.1"/>
    <property type="molecule type" value="Genomic_DNA"/>
</dbReference>
<dbReference type="EMBL" id="CP000284">
    <property type="protein sequence ID" value="ABE49174.1"/>
    <property type="molecule type" value="Genomic_DNA"/>
</dbReference>
<dbReference type="RefSeq" id="WP_011479271.1">
    <property type="nucleotide sequence ID" value="NC_007947.1"/>
</dbReference>
<dbReference type="SMR" id="Q9RAM7"/>
<dbReference type="STRING" id="265072.Mfla_0906"/>
<dbReference type="KEGG" id="mfa:Mfla_0906"/>
<dbReference type="KEGG" id="mfa:Mfla_1050"/>
<dbReference type="eggNOG" id="COG0207">
    <property type="taxonomic scope" value="Bacteria"/>
</dbReference>
<dbReference type="HOGENOM" id="CLU_021669_0_0_4"/>
<dbReference type="OrthoDB" id="9774633at2"/>
<dbReference type="UniPathway" id="UPA00575"/>
<dbReference type="Proteomes" id="UP000002440">
    <property type="component" value="Chromosome"/>
</dbReference>
<dbReference type="GO" id="GO:0005829">
    <property type="term" value="C:cytosol"/>
    <property type="evidence" value="ECO:0007669"/>
    <property type="project" value="TreeGrafter"/>
</dbReference>
<dbReference type="GO" id="GO:0004799">
    <property type="term" value="F:thymidylate synthase activity"/>
    <property type="evidence" value="ECO:0007669"/>
    <property type="project" value="UniProtKB-UniRule"/>
</dbReference>
<dbReference type="GO" id="GO:0006231">
    <property type="term" value="P:dTMP biosynthetic process"/>
    <property type="evidence" value="ECO:0007669"/>
    <property type="project" value="UniProtKB-UniRule"/>
</dbReference>
<dbReference type="GO" id="GO:0006235">
    <property type="term" value="P:dTTP biosynthetic process"/>
    <property type="evidence" value="ECO:0007669"/>
    <property type="project" value="UniProtKB-UniRule"/>
</dbReference>
<dbReference type="GO" id="GO:0032259">
    <property type="term" value="P:methylation"/>
    <property type="evidence" value="ECO:0007669"/>
    <property type="project" value="UniProtKB-KW"/>
</dbReference>
<dbReference type="CDD" id="cd00351">
    <property type="entry name" value="TS_Pyrimidine_HMase"/>
    <property type="match status" value="1"/>
</dbReference>
<dbReference type="FunFam" id="3.30.572.10:FF:000001">
    <property type="entry name" value="Thymidylate synthase"/>
    <property type="match status" value="1"/>
</dbReference>
<dbReference type="Gene3D" id="3.30.572.10">
    <property type="entry name" value="Thymidylate synthase/dCMP hydroxymethylase domain"/>
    <property type="match status" value="1"/>
</dbReference>
<dbReference type="HAMAP" id="MF_00008">
    <property type="entry name" value="Thymidy_synth_bact"/>
    <property type="match status" value="1"/>
</dbReference>
<dbReference type="InterPro" id="IPR045097">
    <property type="entry name" value="Thymidate_synth/dCMP_Mease"/>
</dbReference>
<dbReference type="InterPro" id="IPR023451">
    <property type="entry name" value="Thymidate_synth/dCMP_Mease_dom"/>
</dbReference>
<dbReference type="InterPro" id="IPR036926">
    <property type="entry name" value="Thymidate_synth/dCMP_Mease_sf"/>
</dbReference>
<dbReference type="InterPro" id="IPR000398">
    <property type="entry name" value="Thymidylate_synthase"/>
</dbReference>
<dbReference type="InterPro" id="IPR020940">
    <property type="entry name" value="Thymidylate_synthase_AS"/>
</dbReference>
<dbReference type="NCBIfam" id="NF002497">
    <property type="entry name" value="PRK01827.1-3"/>
    <property type="match status" value="1"/>
</dbReference>
<dbReference type="NCBIfam" id="NF002499">
    <property type="entry name" value="PRK01827.1-5"/>
    <property type="match status" value="1"/>
</dbReference>
<dbReference type="NCBIfam" id="TIGR03284">
    <property type="entry name" value="thym_sym"/>
    <property type="match status" value="2"/>
</dbReference>
<dbReference type="PANTHER" id="PTHR11548:SF9">
    <property type="entry name" value="THYMIDYLATE SYNTHASE"/>
    <property type="match status" value="1"/>
</dbReference>
<dbReference type="PANTHER" id="PTHR11548">
    <property type="entry name" value="THYMIDYLATE SYNTHASE 1"/>
    <property type="match status" value="1"/>
</dbReference>
<dbReference type="Pfam" id="PF00303">
    <property type="entry name" value="Thymidylat_synt"/>
    <property type="match status" value="1"/>
</dbReference>
<dbReference type="PRINTS" id="PR00108">
    <property type="entry name" value="THYMDSNTHASE"/>
</dbReference>
<dbReference type="SUPFAM" id="SSF55831">
    <property type="entry name" value="Thymidylate synthase/dCMP hydroxymethylase"/>
    <property type="match status" value="1"/>
</dbReference>
<dbReference type="PROSITE" id="PS00091">
    <property type="entry name" value="THYMIDYLATE_SYNTHASE"/>
    <property type="match status" value="1"/>
</dbReference>
<keyword id="KW-0963">Cytoplasm</keyword>
<keyword id="KW-0489">Methyltransferase</keyword>
<keyword id="KW-0545">Nucleotide biosynthesis</keyword>
<keyword id="KW-1185">Reference proteome</keyword>
<keyword id="KW-0808">Transferase</keyword>